<reference key="1">
    <citation type="journal article" date="1988" name="Nucleic Acids Res.">
        <title>Nucleotide sequence of part of Photobacterium leiognathi lux region.</title>
        <authorList>
            <person name="Illiarinov B.A."/>
            <person name="Protopopova M.V."/>
            <person name="Karginov V.A."/>
            <person name="Mertvetsov N.P."/>
            <person name="Gitelson J.I."/>
        </authorList>
    </citation>
    <scope>NUCLEOTIDE SEQUENCE [GENOMIC DNA]</scope>
    <source>
        <strain>554</strain>
    </source>
</reference>
<reference key="2">
    <citation type="journal article" date="1988" name="Bioorg. Khim.">
        <title>Nucleotide sequence of genes for alpha- and beta-subunits of luciferase from Photobacterium leiognathi.</title>
        <authorList>
            <person name="Illarionov B.A."/>
            <person name="Protopopova M.V."/>
            <person name="Karginov V.A."/>
            <person name="Mertvetsov N.P."/>
            <person name="Gitelson J.I."/>
        </authorList>
    </citation>
    <scope>NUCLEOTIDE SEQUENCE [GENOMIC DNA]</scope>
    <source>
        <strain>554</strain>
    </source>
</reference>
<reference key="3">
    <citation type="journal article" date="1990" name="Gene">
        <title>Isolation of bioluminescent functions from Photobacterium leiognathi: analysis of luxA, luxB, luxG and neighboring genes.</title>
        <authorList>
            <person name="Illarionov B.A."/>
            <person name="Blinov V.M."/>
            <person name="Donchenko A.P."/>
            <person name="Protopopova M.V."/>
            <person name="Karginov V.A."/>
            <person name="Mertvetsov N.P."/>
            <person name="Gitelson J.I."/>
        </authorList>
    </citation>
    <scope>NUCLEOTIDE SEQUENCE [GENOMIC DNA]</scope>
    <source>
        <strain>554</strain>
    </source>
</reference>
<proteinExistence type="evidence at protein level"/>
<protein>
    <recommendedName>
        <fullName>Alkanal monooxygenase beta chain</fullName>
        <ecNumber evidence="2">1.14.14.3</ecNumber>
    </recommendedName>
    <alternativeName>
        <fullName>Bacterial luciferase beta chain</fullName>
    </alternativeName>
</protein>
<gene>
    <name type="primary">luxB</name>
</gene>
<name>LUXB1_PHOLE</name>
<evidence type="ECO:0000250" key="1">
    <source>
        <dbReference type="UniProtKB" id="P07740"/>
    </source>
</evidence>
<evidence type="ECO:0000250" key="2">
    <source>
        <dbReference type="UniProtKB" id="P12744"/>
    </source>
</evidence>
<evidence type="ECO:0000305" key="3"/>
<evidence type="ECO:0007829" key="4">
    <source>
        <dbReference type="PDB" id="6FRI"/>
    </source>
</evidence>
<sequence>MNFGLFFLNFQLKGMTSEAVLDNMIDTIALVDKDEYHFKTAFVNEHHFSKNGIVGAPMTAASFLLGLTERLHIGSLNQVITTHHPVRIAEEASLLDQMSDGRFILGLSDCVSDFEMDFFKRQRDSQQQQFEACYEILNDGITTNYCYANNDFYNFPKISINPHCISKENLKQYILATSMGVVEWAAKKGLPLTYRWSDTLAEKENYYQRYLTVAAENNVDITHVDHQFPLLVNINPDRDIAKQEMRDYIRGYIAEAYPNTDQEEKIEELIKQHAVGTEDEYYESSKYALEKTGSKNVLLSFESMKNKAAVIDLINMVNEKIKKNL</sequence>
<comment type="function">
    <text evidence="2">Light-emitting reaction in luminous bacteria. The specific role of the beta subunit is unknown, but it is absolutely required for bioluminescence activity.</text>
</comment>
<comment type="catalytic activity">
    <reaction evidence="2">
        <text>a long-chain fatty aldehyde + FMNH2 + O2 = a long-chain fatty acid + hnu + FMN + H2O + 2 H(+)</text>
        <dbReference type="Rhea" id="RHEA:17181"/>
        <dbReference type="ChEBI" id="CHEBI:15377"/>
        <dbReference type="ChEBI" id="CHEBI:15378"/>
        <dbReference type="ChEBI" id="CHEBI:15379"/>
        <dbReference type="ChEBI" id="CHEBI:17176"/>
        <dbReference type="ChEBI" id="CHEBI:30212"/>
        <dbReference type="ChEBI" id="CHEBI:57560"/>
        <dbReference type="ChEBI" id="CHEBI:57618"/>
        <dbReference type="ChEBI" id="CHEBI:58210"/>
        <dbReference type="EC" id="1.14.14.3"/>
    </reaction>
</comment>
<comment type="subunit">
    <text evidence="1">Heterodimer of an alpha and a beta chain.</text>
</comment>
<comment type="similarity">
    <text evidence="3">Belongs to the bacterial luciferase oxidoreductase family.</text>
</comment>
<dbReference type="EC" id="1.14.14.3" evidence="2"/>
<dbReference type="EMBL" id="X08036">
    <property type="protein sequence ID" value="CAA30832.1"/>
    <property type="molecule type" value="Genomic_DNA"/>
</dbReference>
<dbReference type="PIR" id="S01698">
    <property type="entry name" value="S01698"/>
</dbReference>
<dbReference type="RefSeq" id="WP_053987809.1">
    <property type="nucleotide sequence ID" value="NZ_LNRC01000002.1"/>
</dbReference>
<dbReference type="PDB" id="6FRI">
    <property type="method" value="X-ray"/>
    <property type="resolution" value="2.30 A"/>
    <property type="chains" value="A/B/C/D=1-325"/>
</dbReference>
<dbReference type="PDBsum" id="6FRI"/>
<dbReference type="SMR" id="P09141"/>
<dbReference type="STRING" id="553611.GCA_001557755_01580"/>
<dbReference type="GO" id="GO:0005829">
    <property type="term" value="C:cytosol"/>
    <property type="evidence" value="ECO:0007669"/>
    <property type="project" value="TreeGrafter"/>
</dbReference>
<dbReference type="GO" id="GO:0047646">
    <property type="term" value="F:alkanal monooxygenase (FMN-linked) activity"/>
    <property type="evidence" value="ECO:0007669"/>
    <property type="project" value="UniProtKB-EC"/>
</dbReference>
<dbReference type="GO" id="GO:0008218">
    <property type="term" value="P:bioluminescence"/>
    <property type="evidence" value="ECO:0007669"/>
    <property type="project" value="UniProtKB-KW"/>
</dbReference>
<dbReference type="CDD" id="cd01096">
    <property type="entry name" value="Alkanal_monooxygenase"/>
    <property type="match status" value="1"/>
</dbReference>
<dbReference type="Gene3D" id="3.20.20.30">
    <property type="entry name" value="Luciferase-like domain"/>
    <property type="match status" value="2"/>
</dbReference>
<dbReference type="InterPro" id="IPR033924">
    <property type="entry name" value="Alkanal_monooxygenase"/>
</dbReference>
<dbReference type="InterPro" id="IPR050766">
    <property type="entry name" value="Bact_Lucif_Oxidored"/>
</dbReference>
<dbReference type="InterPro" id="IPR018235">
    <property type="entry name" value="Bacterial_luciferase_CS"/>
</dbReference>
<dbReference type="InterPro" id="IPR011251">
    <property type="entry name" value="Luciferase-like_dom"/>
</dbReference>
<dbReference type="InterPro" id="IPR036661">
    <property type="entry name" value="Luciferase-like_sf"/>
</dbReference>
<dbReference type="InterPro" id="IPR002103">
    <property type="entry name" value="Luciferase_bac/NFP"/>
</dbReference>
<dbReference type="PANTHER" id="PTHR30137:SF8">
    <property type="entry name" value="BLR5498 PROTEIN"/>
    <property type="match status" value="1"/>
</dbReference>
<dbReference type="PANTHER" id="PTHR30137">
    <property type="entry name" value="LUCIFERASE-LIKE MONOOXYGENASE"/>
    <property type="match status" value="1"/>
</dbReference>
<dbReference type="Pfam" id="PF00296">
    <property type="entry name" value="Bac_luciferase"/>
    <property type="match status" value="1"/>
</dbReference>
<dbReference type="PRINTS" id="PR00089">
    <property type="entry name" value="LUCIFERASE"/>
</dbReference>
<dbReference type="SUPFAM" id="SSF51679">
    <property type="entry name" value="Bacterial luciferase-like"/>
    <property type="match status" value="1"/>
</dbReference>
<dbReference type="PROSITE" id="PS00494">
    <property type="entry name" value="BACTERIAL_LUCIFERASE"/>
    <property type="match status" value="1"/>
</dbReference>
<feature type="chain" id="PRO_0000220174" description="Alkanal monooxygenase beta chain">
    <location>
        <begin position="1"/>
        <end position="325"/>
    </location>
</feature>
<feature type="strand" evidence="4">
    <location>
        <begin position="2"/>
        <end position="7"/>
    </location>
</feature>
<feature type="helix" evidence="4">
    <location>
        <begin position="17"/>
        <end position="31"/>
    </location>
</feature>
<feature type="strand" evidence="4">
    <location>
        <begin position="40"/>
        <end position="43"/>
    </location>
</feature>
<feature type="strand" evidence="4">
    <location>
        <begin position="48"/>
        <end position="51"/>
    </location>
</feature>
<feature type="helix" evidence="4">
    <location>
        <begin position="57"/>
        <end position="67"/>
    </location>
</feature>
<feature type="strand" evidence="4">
    <location>
        <begin position="69"/>
        <end position="79"/>
    </location>
</feature>
<feature type="helix" evidence="4">
    <location>
        <begin position="85"/>
        <end position="98"/>
    </location>
</feature>
<feature type="strand" evidence="4">
    <location>
        <begin position="103"/>
        <end position="108"/>
    </location>
</feature>
<feature type="helix" evidence="4">
    <location>
        <begin position="113"/>
        <end position="118"/>
    </location>
</feature>
<feature type="helix" evidence="4">
    <location>
        <begin position="126"/>
        <end position="143"/>
    </location>
</feature>
<feature type="strand" evidence="4">
    <location>
        <begin position="144"/>
        <end position="152"/>
    </location>
</feature>
<feature type="strand" evidence="4">
    <location>
        <begin position="154"/>
        <end position="159"/>
    </location>
</feature>
<feature type="helix" evidence="4">
    <location>
        <begin position="167"/>
        <end position="169"/>
    </location>
</feature>
<feature type="strand" evidence="4">
    <location>
        <begin position="172"/>
        <end position="176"/>
    </location>
</feature>
<feature type="helix" evidence="4">
    <location>
        <begin position="179"/>
        <end position="188"/>
    </location>
</feature>
<feature type="strand" evidence="4">
    <location>
        <begin position="192"/>
        <end position="194"/>
    </location>
</feature>
<feature type="helix" evidence="4">
    <location>
        <begin position="200"/>
        <end position="216"/>
    </location>
</feature>
<feature type="strand" evidence="4">
    <location>
        <begin position="226"/>
        <end position="234"/>
    </location>
</feature>
<feature type="helix" evidence="4">
    <location>
        <begin position="238"/>
        <end position="256"/>
    </location>
</feature>
<feature type="helix" evidence="4">
    <location>
        <begin position="262"/>
        <end position="272"/>
    </location>
</feature>
<feature type="strand" evidence="4">
    <location>
        <begin position="273"/>
        <end position="276"/>
    </location>
</feature>
<feature type="helix" evidence="4">
    <location>
        <begin position="283"/>
        <end position="291"/>
    </location>
</feature>
<feature type="strand" evidence="4">
    <location>
        <begin position="294"/>
        <end position="300"/>
    </location>
</feature>
<feature type="helix" evidence="4">
    <location>
        <begin position="307"/>
        <end position="321"/>
    </location>
</feature>
<keyword id="KW-0002">3D-structure</keyword>
<keyword id="KW-0285">Flavoprotein</keyword>
<keyword id="KW-0288">FMN</keyword>
<keyword id="KW-0455">Luminescence</keyword>
<keyword id="KW-0503">Monooxygenase</keyword>
<keyword id="KW-0560">Oxidoreductase</keyword>
<keyword id="KW-0599">Photoprotein</keyword>
<organism>
    <name type="scientific">Photobacterium leiognathi</name>
    <dbReference type="NCBI Taxonomy" id="553611"/>
    <lineage>
        <taxon>Bacteria</taxon>
        <taxon>Pseudomonadati</taxon>
        <taxon>Pseudomonadota</taxon>
        <taxon>Gammaproteobacteria</taxon>
        <taxon>Vibrionales</taxon>
        <taxon>Vibrionaceae</taxon>
        <taxon>Photobacterium</taxon>
    </lineage>
</organism>
<accession>P09141</accession>